<organism>
    <name type="scientific">Nostoc punctiforme (strain ATCC 29133 / PCC 73102)</name>
    <dbReference type="NCBI Taxonomy" id="63737"/>
    <lineage>
        <taxon>Bacteria</taxon>
        <taxon>Bacillati</taxon>
        <taxon>Cyanobacteriota</taxon>
        <taxon>Cyanophyceae</taxon>
        <taxon>Nostocales</taxon>
        <taxon>Nostocaceae</taxon>
        <taxon>Nostoc</taxon>
    </lineage>
</organism>
<evidence type="ECO:0000255" key="1">
    <source>
        <dbReference type="HAMAP-Rule" id="MF_00223"/>
    </source>
</evidence>
<evidence type="ECO:0000256" key="2">
    <source>
        <dbReference type="SAM" id="MobiDB-lite"/>
    </source>
</evidence>
<accession>B2J1L7</accession>
<keyword id="KW-0342">GTP-binding</keyword>
<keyword id="KW-0378">Hydrolase</keyword>
<keyword id="KW-0479">Metal-binding</keyword>
<keyword id="KW-0547">Nucleotide-binding</keyword>
<keyword id="KW-0554">One-carbon metabolism</keyword>
<keyword id="KW-1185">Reference proteome</keyword>
<keyword id="KW-0862">Zinc</keyword>
<proteinExistence type="inferred from homology"/>
<comment type="catalytic activity">
    <reaction evidence="1">
        <text>GTP + H2O = 7,8-dihydroneopterin 3'-triphosphate + formate + H(+)</text>
        <dbReference type="Rhea" id="RHEA:17473"/>
        <dbReference type="ChEBI" id="CHEBI:15377"/>
        <dbReference type="ChEBI" id="CHEBI:15378"/>
        <dbReference type="ChEBI" id="CHEBI:15740"/>
        <dbReference type="ChEBI" id="CHEBI:37565"/>
        <dbReference type="ChEBI" id="CHEBI:58462"/>
        <dbReference type="EC" id="3.5.4.16"/>
    </reaction>
</comment>
<comment type="pathway">
    <text evidence="1">Cofactor biosynthesis; 7,8-dihydroneopterin triphosphate biosynthesis; 7,8-dihydroneopterin triphosphate from GTP: step 1/1.</text>
</comment>
<comment type="subunit">
    <text evidence="1">Homomer.</text>
</comment>
<comment type="similarity">
    <text evidence="1">Belongs to the GTP cyclohydrolase I family.</text>
</comment>
<protein>
    <recommendedName>
        <fullName evidence="1">GTP cyclohydrolase 1</fullName>
        <ecNumber evidence="1">3.5.4.16</ecNumber>
    </recommendedName>
    <alternativeName>
        <fullName evidence="1">GTP cyclohydrolase I</fullName>
        <shortName evidence="1">GTP-CH-I</shortName>
    </alternativeName>
</protein>
<sequence length="235" mass="26706">MTIASSNGSNYSQSPLIPDLADAITPRPDRNTNNGRQADVFPPKEEHIEEMKDAVRKIILGVGEDPEREGLLKTPKRVAEAMRFLTSGYNQSLEELVNDAIFDEGHNEMVLVRDINFFSLCEHHMLPFMGRAHVAYIPNQKVVGLSKLARIVEMYSRRLQVQERLTRQIAEAIQTILEPRGVAVVMEASHMCMVMRGVQKPGSWTVTSAMVGVFQEEHKTREEFFNLIRHQPAFF</sequence>
<name>GCH1_NOSP7</name>
<dbReference type="EC" id="3.5.4.16" evidence="1"/>
<dbReference type="EMBL" id="CP001037">
    <property type="protein sequence ID" value="ACC80378.1"/>
    <property type="molecule type" value="Genomic_DNA"/>
</dbReference>
<dbReference type="RefSeq" id="WP_012408396.1">
    <property type="nucleotide sequence ID" value="NC_010628.1"/>
</dbReference>
<dbReference type="SMR" id="B2J1L7"/>
<dbReference type="STRING" id="63737.Npun_R1707"/>
<dbReference type="EnsemblBacteria" id="ACC80378">
    <property type="protein sequence ID" value="ACC80378"/>
    <property type="gene ID" value="Npun_R1707"/>
</dbReference>
<dbReference type="KEGG" id="npu:Npun_R1707"/>
<dbReference type="eggNOG" id="COG0302">
    <property type="taxonomic scope" value="Bacteria"/>
</dbReference>
<dbReference type="HOGENOM" id="CLU_049768_2_2_3"/>
<dbReference type="OrthoDB" id="9801207at2"/>
<dbReference type="PhylomeDB" id="B2J1L7"/>
<dbReference type="UniPathway" id="UPA00848">
    <property type="reaction ID" value="UER00151"/>
</dbReference>
<dbReference type="Proteomes" id="UP000001191">
    <property type="component" value="Chromosome"/>
</dbReference>
<dbReference type="GO" id="GO:0005737">
    <property type="term" value="C:cytoplasm"/>
    <property type="evidence" value="ECO:0007669"/>
    <property type="project" value="TreeGrafter"/>
</dbReference>
<dbReference type="GO" id="GO:0005525">
    <property type="term" value="F:GTP binding"/>
    <property type="evidence" value="ECO:0007669"/>
    <property type="project" value="UniProtKB-KW"/>
</dbReference>
<dbReference type="GO" id="GO:0003934">
    <property type="term" value="F:GTP cyclohydrolase I activity"/>
    <property type="evidence" value="ECO:0007669"/>
    <property type="project" value="UniProtKB-UniRule"/>
</dbReference>
<dbReference type="GO" id="GO:0008270">
    <property type="term" value="F:zinc ion binding"/>
    <property type="evidence" value="ECO:0007669"/>
    <property type="project" value="UniProtKB-UniRule"/>
</dbReference>
<dbReference type="GO" id="GO:0006730">
    <property type="term" value="P:one-carbon metabolic process"/>
    <property type="evidence" value="ECO:0007669"/>
    <property type="project" value="UniProtKB-UniRule"/>
</dbReference>
<dbReference type="GO" id="GO:0006729">
    <property type="term" value="P:tetrahydrobiopterin biosynthetic process"/>
    <property type="evidence" value="ECO:0007669"/>
    <property type="project" value="TreeGrafter"/>
</dbReference>
<dbReference type="GO" id="GO:0046654">
    <property type="term" value="P:tetrahydrofolate biosynthetic process"/>
    <property type="evidence" value="ECO:0007669"/>
    <property type="project" value="UniProtKB-UniRule"/>
</dbReference>
<dbReference type="CDD" id="cd00642">
    <property type="entry name" value="GTP_cyclohydro1"/>
    <property type="match status" value="1"/>
</dbReference>
<dbReference type="FunFam" id="1.10.286.10:FF:000003">
    <property type="entry name" value="GTP cyclohydrolase 1"/>
    <property type="match status" value="1"/>
</dbReference>
<dbReference type="FunFam" id="3.30.1130.10:FF:000012">
    <property type="entry name" value="GTP cyclohydrolase 1"/>
    <property type="match status" value="1"/>
</dbReference>
<dbReference type="Gene3D" id="1.10.286.10">
    <property type="match status" value="1"/>
</dbReference>
<dbReference type="Gene3D" id="3.30.1130.10">
    <property type="match status" value="1"/>
</dbReference>
<dbReference type="HAMAP" id="MF_00223">
    <property type="entry name" value="FolE"/>
    <property type="match status" value="1"/>
</dbReference>
<dbReference type="InterPro" id="IPR043133">
    <property type="entry name" value="GTP-CH-I_C/QueF"/>
</dbReference>
<dbReference type="InterPro" id="IPR043134">
    <property type="entry name" value="GTP-CH-I_N"/>
</dbReference>
<dbReference type="InterPro" id="IPR001474">
    <property type="entry name" value="GTP_CycHdrlase_I"/>
</dbReference>
<dbReference type="InterPro" id="IPR018234">
    <property type="entry name" value="GTP_CycHdrlase_I_CS"/>
</dbReference>
<dbReference type="InterPro" id="IPR020602">
    <property type="entry name" value="GTP_CycHdrlase_I_dom"/>
</dbReference>
<dbReference type="NCBIfam" id="TIGR00063">
    <property type="entry name" value="folE"/>
    <property type="match status" value="1"/>
</dbReference>
<dbReference type="NCBIfam" id="NF006825">
    <property type="entry name" value="PRK09347.1-2"/>
    <property type="match status" value="1"/>
</dbReference>
<dbReference type="NCBIfam" id="NF006826">
    <property type="entry name" value="PRK09347.1-3"/>
    <property type="match status" value="1"/>
</dbReference>
<dbReference type="PANTHER" id="PTHR11109:SF7">
    <property type="entry name" value="GTP CYCLOHYDROLASE 1"/>
    <property type="match status" value="1"/>
</dbReference>
<dbReference type="PANTHER" id="PTHR11109">
    <property type="entry name" value="GTP CYCLOHYDROLASE I"/>
    <property type="match status" value="1"/>
</dbReference>
<dbReference type="Pfam" id="PF01227">
    <property type="entry name" value="GTP_cyclohydroI"/>
    <property type="match status" value="1"/>
</dbReference>
<dbReference type="SUPFAM" id="SSF55620">
    <property type="entry name" value="Tetrahydrobiopterin biosynthesis enzymes-like"/>
    <property type="match status" value="1"/>
</dbReference>
<dbReference type="PROSITE" id="PS00859">
    <property type="entry name" value="GTP_CYCLOHYDROL_1_1"/>
    <property type="match status" value="1"/>
</dbReference>
<dbReference type="PROSITE" id="PS00860">
    <property type="entry name" value="GTP_CYCLOHYDROL_1_2"/>
    <property type="match status" value="1"/>
</dbReference>
<gene>
    <name evidence="1" type="primary">folE</name>
    <name type="ordered locus">Npun_R1707</name>
</gene>
<reference key="1">
    <citation type="journal article" date="2013" name="Plant Physiol.">
        <title>A Nostoc punctiforme Sugar Transporter Necessary to Establish a Cyanobacterium-Plant Symbiosis.</title>
        <authorList>
            <person name="Ekman M."/>
            <person name="Picossi S."/>
            <person name="Campbell E.L."/>
            <person name="Meeks J.C."/>
            <person name="Flores E."/>
        </authorList>
    </citation>
    <scope>NUCLEOTIDE SEQUENCE [LARGE SCALE GENOMIC DNA]</scope>
    <source>
        <strain>ATCC 29133 / PCC 73102</strain>
    </source>
</reference>
<feature type="chain" id="PRO_1000100187" description="GTP cyclohydrolase 1">
    <location>
        <begin position="1"/>
        <end position="235"/>
    </location>
</feature>
<feature type="region of interest" description="Disordered" evidence="2">
    <location>
        <begin position="1"/>
        <end position="42"/>
    </location>
</feature>
<feature type="compositionally biased region" description="Polar residues" evidence="2">
    <location>
        <begin position="1"/>
        <end position="15"/>
    </location>
</feature>
<feature type="binding site" evidence="1">
    <location>
        <position position="121"/>
    </location>
    <ligand>
        <name>Zn(2+)</name>
        <dbReference type="ChEBI" id="CHEBI:29105"/>
    </ligand>
</feature>
<feature type="binding site" evidence="1">
    <location>
        <position position="124"/>
    </location>
    <ligand>
        <name>Zn(2+)</name>
        <dbReference type="ChEBI" id="CHEBI:29105"/>
    </ligand>
</feature>
<feature type="binding site" evidence="1">
    <location>
        <position position="192"/>
    </location>
    <ligand>
        <name>Zn(2+)</name>
        <dbReference type="ChEBI" id="CHEBI:29105"/>
    </ligand>
</feature>